<keyword id="KW-0687">Ribonucleoprotein</keyword>
<keyword id="KW-0689">Ribosomal protein</keyword>
<keyword id="KW-0694">RNA-binding</keyword>
<keyword id="KW-0699">rRNA-binding</keyword>
<comment type="function">
    <text evidence="1">One of the primary rRNA binding proteins, it binds directly to 16S rRNA central domain where it helps coordinate assembly of the platform of the 30S subunit.</text>
</comment>
<comment type="subunit">
    <text evidence="1">Part of the 30S ribosomal subunit. Contacts proteins S5 and S12.</text>
</comment>
<comment type="similarity">
    <text evidence="1">Belongs to the universal ribosomal protein uS8 family.</text>
</comment>
<organism>
    <name type="scientific">Borreliella afzelii (strain PKo)</name>
    <name type="common">Borrelia afzelii</name>
    <dbReference type="NCBI Taxonomy" id="390236"/>
    <lineage>
        <taxon>Bacteria</taxon>
        <taxon>Pseudomonadati</taxon>
        <taxon>Spirochaetota</taxon>
        <taxon>Spirochaetia</taxon>
        <taxon>Spirochaetales</taxon>
        <taxon>Borreliaceae</taxon>
        <taxon>Borreliella</taxon>
    </lineage>
</organism>
<proteinExistence type="inferred from homology"/>
<gene>
    <name evidence="1" type="primary">rpsH</name>
    <name type="ordered locus">BAPKO_0520</name>
    <name type="ordered locus">BafPKo_0508</name>
</gene>
<name>RS8_BORAP</name>
<protein>
    <recommendedName>
        <fullName evidence="1">Small ribosomal subunit protein uS8</fullName>
    </recommendedName>
    <alternativeName>
        <fullName evidence="2">30S ribosomal protein S8</fullName>
    </alternativeName>
</protein>
<sequence length="132" mass="14847">MAITHSVGDMLTKLRNASRVKHGSVDLKMSNMNKSILNILKKEGYIKDFNFLEKEGITFIRVLLKYDNKRNPVINKIDAISTPGRKIYSSYKNMPRIKNGYGILIISSSQGVITGKEAKDKKIGGELICSVW</sequence>
<dbReference type="EMBL" id="CP000395">
    <property type="protein sequence ID" value="ABH01763.1"/>
    <property type="molecule type" value="Genomic_DNA"/>
</dbReference>
<dbReference type="EMBL" id="CP002933">
    <property type="protein sequence ID" value="AEL69716.1"/>
    <property type="molecule type" value="Genomic_DNA"/>
</dbReference>
<dbReference type="RefSeq" id="WP_004789547.1">
    <property type="nucleotide sequence ID" value="NZ_CP160066.1"/>
</dbReference>
<dbReference type="SMR" id="Q0SN15"/>
<dbReference type="STRING" id="29518.BLA32_01800"/>
<dbReference type="GeneID" id="77265339"/>
<dbReference type="KEGG" id="baf:BAPKO_0520"/>
<dbReference type="KEGG" id="bafz:BafPKo_0508"/>
<dbReference type="PATRIC" id="fig|390236.22.peg.489"/>
<dbReference type="eggNOG" id="COG0096">
    <property type="taxonomic scope" value="Bacteria"/>
</dbReference>
<dbReference type="HOGENOM" id="CLU_098428_0_2_12"/>
<dbReference type="OrthoDB" id="9802617at2"/>
<dbReference type="Proteomes" id="UP000005216">
    <property type="component" value="Chromosome"/>
</dbReference>
<dbReference type="GO" id="GO:1990904">
    <property type="term" value="C:ribonucleoprotein complex"/>
    <property type="evidence" value="ECO:0007669"/>
    <property type="project" value="UniProtKB-KW"/>
</dbReference>
<dbReference type="GO" id="GO:0005840">
    <property type="term" value="C:ribosome"/>
    <property type="evidence" value="ECO:0007669"/>
    <property type="project" value="UniProtKB-KW"/>
</dbReference>
<dbReference type="GO" id="GO:0019843">
    <property type="term" value="F:rRNA binding"/>
    <property type="evidence" value="ECO:0007669"/>
    <property type="project" value="UniProtKB-UniRule"/>
</dbReference>
<dbReference type="GO" id="GO:0003735">
    <property type="term" value="F:structural constituent of ribosome"/>
    <property type="evidence" value="ECO:0007669"/>
    <property type="project" value="InterPro"/>
</dbReference>
<dbReference type="GO" id="GO:0006412">
    <property type="term" value="P:translation"/>
    <property type="evidence" value="ECO:0007669"/>
    <property type="project" value="UniProtKB-UniRule"/>
</dbReference>
<dbReference type="FunFam" id="3.30.1370.30:FF:000002">
    <property type="entry name" value="30S ribosomal protein S8"/>
    <property type="match status" value="1"/>
</dbReference>
<dbReference type="FunFam" id="3.30.1490.10:FF:000001">
    <property type="entry name" value="30S ribosomal protein S8"/>
    <property type="match status" value="1"/>
</dbReference>
<dbReference type="Gene3D" id="3.30.1370.30">
    <property type="match status" value="1"/>
</dbReference>
<dbReference type="Gene3D" id="3.30.1490.10">
    <property type="match status" value="1"/>
</dbReference>
<dbReference type="HAMAP" id="MF_01302_B">
    <property type="entry name" value="Ribosomal_uS8_B"/>
    <property type="match status" value="1"/>
</dbReference>
<dbReference type="InterPro" id="IPR000630">
    <property type="entry name" value="Ribosomal_uS8"/>
</dbReference>
<dbReference type="InterPro" id="IPR047863">
    <property type="entry name" value="Ribosomal_uS8_CS"/>
</dbReference>
<dbReference type="InterPro" id="IPR035987">
    <property type="entry name" value="Ribosomal_uS8_sf"/>
</dbReference>
<dbReference type="NCBIfam" id="NF001109">
    <property type="entry name" value="PRK00136.1"/>
    <property type="match status" value="1"/>
</dbReference>
<dbReference type="PANTHER" id="PTHR11758">
    <property type="entry name" value="40S RIBOSOMAL PROTEIN S15A"/>
    <property type="match status" value="1"/>
</dbReference>
<dbReference type="Pfam" id="PF00410">
    <property type="entry name" value="Ribosomal_S8"/>
    <property type="match status" value="1"/>
</dbReference>
<dbReference type="SUPFAM" id="SSF56047">
    <property type="entry name" value="Ribosomal protein S8"/>
    <property type="match status" value="1"/>
</dbReference>
<dbReference type="PROSITE" id="PS00053">
    <property type="entry name" value="RIBOSOMAL_S8"/>
    <property type="match status" value="1"/>
</dbReference>
<reference key="1">
    <citation type="journal article" date="2006" name="BMC Genomics">
        <title>Comparative genome analysis: selection pressure on the Borrelia vls cassettes is essential for infectivity.</title>
        <authorList>
            <person name="Gloeckner G."/>
            <person name="Schulte-Spechtel U."/>
            <person name="Schilhabel M."/>
            <person name="Felder M."/>
            <person name="Suehnel J."/>
            <person name="Wilske B."/>
            <person name="Platzer M."/>
        </authorList>
    </citation>
    <scope>NUCLEOTIDE SEQUENCE [LARGE SCALE GENOMIC DNA]</scope>
    <source>
        <strain>PKo</strain>
    </source>
</reference>
<reference key="2">
    <citation type="journal article" date="2011" name="J. Bacteriol.">
        <title>Whole-genome sequences of two Borrelia afzelii and two Borrelia garinii Lyme disease agent isolates.</title>
        <authorList>
            <person name="Casjens S.R."/>
            <person name="Mongodin E.F."/>
            <person name="Qiu W.G."/>
            <person name="Dunn J.J."/>
            <person name="Luft B.J."/>
            <person name="Fraser-Liggett C.M."/>
            <person name="Schutzer S.E."/>
        </authorList>
    </citation>
    <scope>NUCLEOTIDE SEQUENCE [LARGE SCALE GENOMIC DNA]</scope>
    <source>
        <strain>PKo</strain>
    </source>
</reference>
<feature type="chain" id="PRO_0000290809" description="Small ribosomal subunit protein uS8">
    <location>
        <begin position="1"/>
        <end position="132"/>
    </location>
</feature>
<accession>Q0SN15</accession>
<accession>G0ISD5</accession>
<evidence type="ECO:0000255" key="1">
    <source>
        <dbReference type="HAMAP-Rule" id="MF_01302"/>
    </source>
</evidence>
<evidence type="ECO:0000305" key="2"/>